<dbReference type="EC" id="1.1.1.-" evidence="2"/>
<dbReference type="EMBL" id="CU329672">
    <property type="protein sequence ID" value="CAA19066.1"/>
    <property type="molecule type" value="Genomic_DNA"/>
</dbReference>
<dbReference type="PIR" id="T41659">
    <property type="entry name" value="T41659"/>
</dbReference>
<dbReference type="SMR" id="O59826"/>
<dbReference type="BioGRID" id="276133">
    <property type="interactions" value="5"/>
</dbReference>
<dbReference type="FunCoup" id="O59826">
    <property type="interactions" value="15"/>
</dbReference>
<dbReference type="STRING" id="284812.O59826"/>
<dbReference type="iPTMnet" id="O59826"/>
<dbReference type="PaxDb" id="4896-SPCC965.06.1"/>
<dbReference type="EnsemblFungi" id="SPCC965.06.1">
    <property type="protein sequence ID" value="SPCC965.06.1:pep"/>
    <property type="gene ID" value="SPCC965.06"/>
</dbReference>
<dbReference type="KEGG" id="spo:2539573"/>
<dbReference type="PomBase" id="SPCC965.06"/>
<dbReference type="VEuPathDB" id="FungiDB:SPCC965.06"/>
<dbReference type="eggNOG" id="KOG1575">
    <property type="taxonomic scope" value="Eukaryota"/>
</dbReference>
<dbReference type="HOGENOM" id="CLU_023205_2_0_1"/>
<dbReference type="InParanoid" id="O59826"/>
<dbReference type="OMA" id="YLPWSPL"/>
<dbReference type="PhylomeDB" id="O59826"/>
<dbReference type="Reactome" id="R-SPO-6798695">
    <property type="pathway name" value="Neutrophil degranulation"/>
</dbReference>
<dbReference type="PRO" id="PR:O59826"/>
<dbReference type="Proteomes" id="UP000002485">
    <property type="component" value="Chromosome III"/>
</dbReference>
<dbReference type="GO" id="GO:0005829">
    <property type="term" value="C:cytosol"/>
    <property type="evidence" value="ECO:0007005"/>
    <property type="project" value="PomBase"/>
</dbReference>
<dbReference type="GO" id="GO:0034702">
    <property type="term" value="C:monoatomic ion channel complex"/>
    <property type="evidence" value="ECO:0007669"/>
    <property type="project" value="UniProtKB-KW"/>
</dbReference>
<dbReference type="GO" id="GO:0005634">
    <property type="term" value="C:nucleus"/>
    <property type="evidence" value="ECO:0007005"/>
    <property type="project" value="PomBase"/>
</dbReference>
<dbReference type="GO" id="GO:0016491">
    <property type="term" value="F:oxidoreductase activity"/>
    <property type="evidence" value="ECO:0007669"/>
    <property type="project" value="UniProtKB-KW"/>
</dbReference>
<dbReference type="GO" id="GO:0071805">
    <property type="term" value="P:potassium ion transmembrane transport"/>
    <property type="evidence" value="ECO:0000255"/>
    <property type="project" value="PomBase"/>
</dbReference>
<dbReference type="CDD" id="cd19143">
    <property type="entry name" value="AKR_AKR6C1_2"/>
    <property type="match status" value="1"/>
</dbReference>
<dbReference type="Gene3D" id="3.20.20.100">
    <property type="entry name" value="NADP-dependent oxidoreductase domain"/>
    <property type="match status" value="1"/>
</dbReference>
<dbReference type="InterPro" id="IPR005399">
    <property type="entry name" value="K_chnl_volt-dep_bsu_KCNAB-rel"/>
</dbReference>
<dbReference type="InterPro" id="IPR005400">
    <property type="entry name" value="K_chnl_volt-dep_bsu_KCNAB1"/>
</dbReference>
<dbReference type="InterPro" id="IPR023210">
    <property type="entry name" value="NADP_OxRdtase_dom"/>
</dbReference>
<dbReference type="InterPro" id="IPR036812">
    <property type="entry name" value="NADP_OxRdtase_dom_sf"/>
</dbReference>
<dbReference type="PANTHER" id="PTHR43150">
    <property type="entry name" value="HYPERKINETIC, ISOFORM M"/>
    <property type="match status" value="1"/>
</dbReference>
<dbReference type="PANTHER" id="PTHR43150:SF2">
    <property type="entry name" value="HYPERKINETIC, ISOFORM M"/>
    <property type="match status" value="1"/>
</dbReference>
<dbReference type="Pfam" id="PF00248">
    <property type="entry name" value="Aldo_ket_red"/>
    <property type="match status" value="1"/>
</dbReference>
<dbReference type="PRINTS" id="PR01578">
    <property type="entry name" value="KCNAB1CHANEL"/>
</dbReference>
<dbReference type="PRINTS" id="PR01577">
    <property type="entry name" value="KCNABCHANNEL"/>
</dbReference>
<dbReference type="SUPFAM" id="SSF51430">
    <property type="entry name" value="NAD(P)-linked oxidoreductase"/>
    <property type="match status" value="1"/>
</dbReference>
<comment type="function">
    <text evidence="1">Probable accessory potassium channel protein which modulates the activity of the pore-forming alpha subunit.</text>
</comment>
<comment type="subunit">
    <text evidence="1">Forms heteromultimeric complexes with potassium channel alpha subunits.</text>
</comment>
<comment type="subcellular location">
    <subcellularLocation>
        <location evidence="4">Cytoplasm</location>
    </subcellularLocation>
    <subcellularLocation>
        <location evidence="4">Nucleus</location>
    </subcellularLocation>
</comment>
<comment type="similarity">
    <text evidence="5">Belongs to the shaker potassium channel beta subunit family.</text>
</comment>
<organism>
    <name type="scientific">Schizosaccharomyces pombe (strain 972 / ATCC 24843)</name>
    <name type="common">Fission yeast</name>
    <dbReference type="NCBI Taxonomy" id="284812"/>
    <lineage>
        <taxon>Eukaryota</taxon>
        <taxon>Fungi</taxon>
        <taxon>Dikarya</taxon>
        <taxon>Ascomycota</taxon>
        <taxon>Taphrinomycotina</taxon>
        <taxon>Schizosaccharomycetes</taxon>
        <taxon>Schizosaccharomycetales</taxon>
        <taxon>Schizosaccharomycetaceae</taxon>
        <taxon>Schizosaccharomyces</taxon>
    </lineage>
</organism>
<feature type="chain" id="PRO_0000310339" description="Putative voltage-gated potassium channel subunit beta">
    <location>
        <begin position="1"/>
        <end position="344"/>
    </location>
</feature>
<feature type="active site" description="Proton donor/acceptor" evidence="2">
    <location>
        <position position="67"/>
    </location>
</feature>
<feature type="binding site" evidence="2">
    <location>
        <position position="33"/>
    </location>
    <ligand>
        <name>NADP(+)</name>
        <dbReference type="ChEBI" id="CHEBI:58349"/>
    </ligand>
</feature>
<feature type="binding site" evidence="3">
    <location>
        <position position="62"/>
    </location>
    <ligand>
        <name>NADP(+)</name>
        <dbReference type="ChEBI" id="CHEBI:58349"/>
    </ligand>
</feature>
<feature type="binding site" evidence="3">
    <location>
        <position position="67"/>
    </location>
    <ligand>
        <name>NADP(+)</name>
        <dbReference type="ChEBI" id="CHEBI:58349"/>
    </ligand>
</feature>
<feature type="binding site" evidence="2">
    <location>
        <position position="167"/>
    </location>
    <ligand>
        <name>NADP(+)</name>
        <dbReference type="ChEBI" id="CHEBI:58349"/>
    </ligand>
</feature>
<feature type="binding site" evidence="3">
    <location>
        <position position="193"/>
    </location>
    <ligand>
        <name>NADP(+)</name>
        <dbReference type="ChEBI" id="CHEBI:58349"/>
    </ligand>
</feature>
<feature type="binding site" evidence="2">
    <location>
        <position position="222"/>
    </location>
    <ligand>
        <name>NADP(+)</name>
        <dbReference type="ChEBI" id="CHEBI:58349"/>
    </ligand>
</feature>
<feature type="binding site" evidence="2">
    <location>
        <position position="223"/>
    </location>
    <ligand>
        <name>NADP(+)</name>
        <dbReference type="ChEBI" id="CHEBI:58349"/>
    </ligand>
</feature>
<feature type="binding site" evidence="2">
    <location>
        <position position="224"/>
    </location>
    <ligand>
        <name>NADP(+)</name>
        <dbReference type="ChEBI" id="CHEBI:58349"/>
    </ligand>
</feature>
<feature type="binding site" evidence="2">
    <location>
        <position position="225"/>
    </location>
    <ligand>
        <name>NADP(+)</name>
        <dbReference type="ChEBI" id="CHEBI:58349"/>
    </ligand>
</feature>
<feature type="binding site" evidence="3">
    <location>
        <position position="233"/>
    </location>
    <ligand>
        <name>NADP(+)</name>
        <dbReference type="ChEBI" id="CHEBI:58349"/>
    </ligand>
</feature>
<feature type="binding site" evidence="2">
    <location>
        <position position="243"/>
    </location>
    <ligand>
        <name>NADP(+)</name>
        <dbReference type="ChEBI" id="CHEBI:58349"/>
    </ligand>
</feature>
<feature type="binding site" evidence="2">
    <location>
        <position position="301"/>
    </location>
    <ligand>
        <name>NADP(+)</name>
        <dbReference type="ChEBI" id="CHEBI:58349"/>
    </ligand>
</feature>
<feature type="binding site" evidence="2">
    <location>
        <position position="303"/>
    </location>
    <ligand>
        <name>NADP(+)</name>
        <dbReference type="ChEBI" id="CHEBI:58349"/>
    </ligand>
</feature>
<feature type="binding site" evidence="2">
    <location>
        <position position="307"/>
    </location>
    <ligand>
        <name>NADP(+)</name>
        <dbReference type="ChEBI" id="CHEBI:58349"/>
    </ligand>
</feature>
<feature type="binding site" evidence="2">
    <location>
        <position position="310"/>
    </location>
    <ligand>
        <name>NADP(+)</name>
        <dbReference type="ChEBI" id="CHEBI:58349"/>
    </ligand>
</feature>
<feature type="binding site" evidence="2">
    <location>
        <position position="311"/>
    </location>
    <ligand>
        <name>NADP(+)</name>
        <dbReference type="ChEBI" id="CHEBI:58349"/>
    </ligand>
</feature>
<name>KCAB_SCHPO</name>
<evidence type="ECO:0000250" key="1">
    <source>
        <dbReference type="UniProtKB" id="O43448"/>
    </source>
</evidence>
<evidence type="ECO:0000250" key="2">
    <source>
        <dbReference type="UniProtKB" id="P62483"/>
    </source>
</evidence>
<evidence type="ECO:0000250" key="3">
    <source>
        <dbReference type="UniProtKB" id="Q13303"/>
    </source>
</evidence>
<evidence type="ECO:0000269" key="4">
    <source>
    </source>
</evidence>
<evidence type="ECO:0000305" key="5"/>
<protein>
    <recommendedName>
        <fullName>Putative voltage-gated potassium channel subunit beta</fullName>
        <ecNumber evidence="2">1.1.1.-</ecNumber>
    </recommendedName>
    <alternativeName>
        <fullName>K(+) channel subunit beta</fullName>
    </alternativeName>
</protein>
<keyword id="KW-0963">Cytoplasm</keyword>
<keyword id="KW-0407">Ion channel</keyword>
<keyword id="KW-0406">Ion transport</keyword>
<keyword id="KW-0521">NADP</keyword>
<keyword id="KW-0539">Nucleus</keyword>
<keyword id="KW-0560">Oxidoreductase</keyword>
<keyword id="KW-0630">Potassium</keyword>
<keyword id="KW-0633">Potassium transport</keyword>
<keyword id="KW-1185">Reference proteome</keyword>
<keyword id="KW-0813">Transport</keyword>
<keyword id="KW-0851">Voltage-gated channel</keyword>
<reference key="1">
    <citation type="journal article" date="2002" name="Nature">
        <title>The genome sequence of Schizosaccharomyces pombe.</title>
        <authorList>
            <person name="Wood V."/>
            <person name="Gwilliam R."/>
            <person name="Rajandream M.A."/>
            <person name="Lyne M.H."/>
            <person name="Lyne R."/>
            <person name="Stewart A."/>
            <person name="Sgouros J.G."/>
            <person name="Peat N."/>
            <person name="Hayles J."/>
            <person name="Baker S.G."/>
            <person name="Basham D."/>
            <person name="Bowman S."/>
            <person name="Brooks K."/>
            <person name="Brown D."/>
            <person name="Brown S."/>
            <person name="Chillingworth T."/>
            <person name="Churcher C.M."/>
            <person name="Collins M."/>
            <person name="Connor R."/>
            <person name="Cronin A."/>
            <person name="Davis P."/>
            <person name="Feltwell T."/>
            <person name="Fraser A."/>
            <person name="Gentles S."/>
            <person name="Goble A."/>
            <person name="Hamlin N."/>
            <person name="Harris D.E."/>
            <person name="Hidalgo J."/>
            <person name="Hodgson G."/>
            <person name="Holroyd S."/>
            <person name="Hornsby T."/>
            <person name="Howarth S."/>
            <person name="Huckle E.J."/>
            <person name="Hunt S."/>
            <person name="Jagels K."/>
            <person name="James K.D."/>
            <person name="Jones L."/>
            <person name="Jones M."/>
            <person name="Leather S."/>
            <person name="McDonald S."/>
            <person name="McLean J."/>
            <person name="Mooney P."/>
            <person name="Moule S."/>
            <person name="Mungall K.L."/>
            <person name="Murphy L.D."/>
            <person name="Niblett D."/>
            <person name="Odell C."/>
            <person name="Oliver K."/>
            <person name="O'Neil S."/>
            <person name="Pearson D."/>
            <person name="Quail M.A."/>
            <person name="Rabbinowitsch E."/>
            <person name="Rutherford K.M."/>
            <person name="Rutter S."/>
            <person name="Saunders D."/>
            <person name="Seeger K."/>
            <person name="Sharp S."/>
            <person name="Skelton J."/>
            <person name="Simmonds M.N."/>
            <person name="Squares R."/>
            <person name="Squares S."/>
            <person name="Stevens K."/>
            <person name="Taylor K."/>
            <person name="Taylor R.G."/>
            <person name="Tivey A."/>
            <person name="Walsh S.V."/>
            <person name="Warren T."/>
            <person name="Whitehead S."/>
            <person name="Woodward J.R."/>
            <person name="Volckaert G."/>
            <person name="Aert R."/>
            <person name="Robben J."/>
            <person name="Grymonprez B."/>
            <person name="Weltjens I."/>
            <person name="Vanstreels E."/>
            <person name="Rieger M."/>
            <person name="Schaefer M."/>
            <person name="Mueller-Auer S."/>
            <person name="Gabel C."/>
            <person name="Fuchs M."/>
            <person name="Duesterhoeft A."/>
            <person name="Fritzc C."/>
            <person name="Holzer E."/>
            <person name="Moestl D."/>
            <person name="Hilbert H."/>
            <person name="Borzym K."/>
            <person name="Langer I."/>
            <person name="Beck A."/>
            <person name="Lehrach H."/>
            <person name="Reinhardt R."/>
            <person name="Pohl T.M."/>
            <person name="Eger P."/>
            <person name="Zimmermann W."/>
            <person name="Wedler H."/>
            <person name="Wambutt R."/>
            <person name="Purnelle B."/>
            <person name="Goffeau A."/>
            <person name="Cadieu E."/>
            <person name="Dreano S."/>
            <person name="Gloux S."/>
            <person name="Lelaure V."/>
            <person name="Mottier S."/>
            <person name="Galibert F."/>
            <person name="Aves S.J."/>
            <person name="Xiang Z."/>
            <person name="Hunt C."/>
            <person name="Moore K."/>
            <person name="Hurst S.M."/>
            <person name="Lucas M."/>
            <person name="Rochet M."/>
            <person name="Gaillardin C."/>
            <person name="Tallada V.A."/>
            <person name="Garzon A."/>
            <person name="Thode G."/>
            <person name="Daga R.R."/>
            <person name="Cruzado L."/>
            <person name="Jimenez J."/>
            <person name="Sanchez M."/>
            <person name="del Rey F."/>
            <person name="Benito J."/>
            <person name="Dominguez A."/>
            <person name="Revuelta J.L."/>
            <person name="Moreno S."/>
            <person name="Armstrong J."/>
            <person name="Forsburg S.L."/>
            <person name="Cerutti L."/>
            <person name="Lowe T."/>
            <person name="McCombie W.R."/>
            <person name="Paulsen I."/>
            <person name="Potashkin J."/>
            <person name="Shpakovski G.V."/>
            <person name="Ussery D."/>
            <person name="Barrell B.G."/>
            <person name="Nurse P."/>
        </authorList>
    </citation>
    <scope>NUCLEOTIDE SEQUENCE [LARGE SCALE GENOMIC DNA]</scope>
    <source>
        <strain>972 / ATCC 24843</strain>
    </source>
</reference>
<reference key="2">
    <citation type="journal article" date="2006" name="Nat. Biotechnol.">
        <title>ORFeome cloning and global analysis of protein localization in the fission yeast Schizosaccharomyces pombe.</title>
        <authorList>
            <person name="Matsuyama A."/>
            <person name="Arai R."/>
            <person name="Yashiroda Y."/>
            <person name="Shirai A."/>
            <person name="Kamata A."/>
            <person name="Sekido S."/>
            <person name="Kobayashi Y."/>
            <person name="Hashimoto A."/>
            <person name="Hamamoto M."/>
            <person name="Hiraoka Y."/>
            <person name="Horinouchi S."/>
            <person name="Yoshida M."/>
        </authorList>
    </citation>
    <scope>SUBCELLULAR LOCATION [LARGE SCALE ANALYSIS]</scope>
</reference>
<sequence>MASATTHFQPKNVPFRFLGRSGLKVSAFSLGGWLTYGNEGYDVEHTKNCLKQAWDLGINTFDTAEIYSNGNSETVMGKAIKELGWDRSEYVITTKVFFGAGTKLPNTTGLSRKHIIEGLNASLKRLGLPYVDVIMAHRPDPSVPMEEVVRAFTQLIQDGKAFYWGTSEWSAFEIEHAHHIATKYNLIAPVADQPQYNYLTRDHFEKDLLPLQQIYGYGATVWSPLKSGILTGKYNDGIPEGSRLSTTFTSLAGQLQTPEGKTQLDQVRQISKIAEQIGATPSQLALAWTLKNPYVSTTILGASKPEQIVENVKAVEFIDKLTPEILKKIDEILNFTPLEIQYRR</sequence>
<proteinExistence type="inferred from homology"/>
<accession>O59826</accession>
<gene>
    <name type="ORF">SPCC965.06</name>
</gene>